<protein>
    <recommendedName>
        <fullName>Forkhead box protein N3</fullName>
    </recommendedName>
    <alternativeName>
        <fullName>Checkpoint suppressor 1</fullName>
    </alternativeName>
</protein>
<proteinExistence type="evidence at protein level"/>
<organism>
    <name type="scientific">Mus musculus</name>
    <name type="common">Mouse</name>
    <dbReference type="NCBI Taxonomy" id="10090"/>
    <lineage>
        <taxon>Eukaryota</taxon>
        <taxon>Metazoa</taxon>
        <taxon>Chordata</taxon>
        <taxon>Craniata</taxon>
        <taxon>Vertebrata</taxon>
        <taxon>Euteleostomi</taxon>
        <taxon>Mammalia</taxon>
        <taxon>Eutheria</taxon>
        <taxon>Euarchontoglires</taxon>
        <taxon>Glires</taxon>
        <taxon>Rodentia</taxon>
        <taxon>Myomorpha</taxon>
        <taxon>Muroidea</taxon>
        <taxon>Muridae</taxon>
        <taxon>Murinae</taxon>
        <taxon>Mus</taxon>
        <taxon>Mus</taxon>
    </lineage>
</organism>
<gene>
    <name type="primary">Foxn3</name>
    <name type="synonym">Ches1</name>
</gene>
<dbReference type="EMBL" id="BC099971">
    <property type="protein sequence ID" value="AAH99971.1"/>
    <property type="molecule type" value="mRNA"/>
</dbReference>
<dbReference type="EMBL" id="AK017346">
    <property type="protein sequence ID" value="BAB30701.1"/>
    <property type="molecule type" value="mRNA"/>
</dbReference>
<dbReference type="EMBL" id="AK077921">
    <property type="protein sequence ID" value="BAC37064.1"/>
    <property type="molecule type" value="mRNA"/>
</dbReference>
<dbReference type="CCDS" id="CCDS26103.1"/>
<dbReference type="RefSeq" id="NP_899009.2">
    <property type="nucleotide sequence ID" value="NM_183186.2"/>
</dbReference>
<dbReference type="RefSeq" id="XP_006516302.1">
    <property type="nucleotide sequence ID" value="XM_006516239.4"/>
</dbReference>
<dbReference type="RefSeq" id="XP_006516303.1">
    <property type="nucleotide sequence ID" value="XM_006516240.3"/>
</dbReference>
<dbReference type="RefSeq" id="XP_030102789.1">
    <property type="nucleotide sequence ID" value="XM_030246929.2"/>
</dbReference>
<dbReference type="RefSeq" id="XP_036013509.1">
    <property type="nucleotide sequence ID" value="XM_036157616.1"/>
</dbReference>
<dbReference type="RefSeq" id="XP_036013510.1">
    <property type="nucleotide sequence ID" value="XM_036157617.1"/>
</dbReference>
<dbReference type="SMR" id="Q499D0"/>
<dbReference type="FunCoup" id="Q499D0">
    <property type="interactions" value="1378"/>
</dbReference>
<dbReference type="STRING" id="10090.ENSMUSP00000036035"/>
<dbReference type="GlyGen" id="Q499D0">
    <property type="glycosylation" value="2 sites"/>
</dbReference>
<dbReference type="iPTMnet" id="Q499D0"/>
<dbReference type="PhosphoSitePlus" id="Q499D0"/>
<dbReference type="PaxDb" id="10090-ENSMUSP00000036035"/>
<dbReference type="PeptideAtlas" id="Q499D0"/>
<dbReference type="ProteomicsDB" id="267401"/>
<dbReference type="Pumba" id="Q499D0"/>
<dbReference type="Antibodypedia" id="13438">
    <property type="antibodies" value="141 antibodies from 24 providers"/>
</dbReference>
<dbReference type="DNASU" id="71375"/>
<dbReference type="Ensembl" id="ENSMUST00000046859.12">
    <property type="protein sequence ID" value="ENSMUSP00000036035.5"/>
    <property type="gene ID" value="ENSMUSG00000033713.13"/>
</dbReference>
<dbReference type="Ensembl" id="ENSMUST00000085108.8">
    <property type="protein sequence ID" value="ENSMUSP00000082189.2"/>
    <property type="gene ID" value="ENSMUSG00000033713.13"/>
</dbReference>
<dbReference type="Ensembl" id="ENSMUST00000177451.8">
    <property type="protein sequence ID" value="ENSMUSP00000135082.2"/>
    <property type="gene ID" value="ENSMUSG00000033713.13"/>
</dbReference>
<dbReference type="GeneID" id="71375"/>
<dbReference type="KEGG" id="mmu:71375"/>
<dbReference type="UCSC" id="uc007ors.1">
    <property type="organism name" value="mouse"/>
</dbReference>
<dbReference type="AGR" id="MGI:1918625"/>
<dbReference type="CTD" id="1112"/>
<dbReference type="MGI" id="MGI:1918625">
    <property type="gene designation" value="Foxn3"/>
</dbReference>
<dbReference type="VEuPathDB" id="HostDB:ENSMUSG00000033713"/>
<dbReference type="eggNOG" id="KOG2294">
    <property type="taxonomic scope" value="Eukaryota"/>
</dbReference>
<dbReference type="GeneTree" id="ENSGT00940000155937"/>
<dbReference type="HOGENOM" id="CLU_032050_1_0_1"/>
<dbReference type="InParanoid" id="Q499D0"/>
<dbReference type="OMA" id="XSIGKGS"/>
<dbReference type="OrthoDB" id="5954824at2759"/>
<dbReference type="PhylomeDB" id="Q499D0"/>
<dbReference type="TreeFam" id="TF105083"/>
<dbReference type="BioGRID-ORCS" id="71375">
    <property type="hits" value="0 hits in 77 CRISPR screens"/>
</dbReference>
<dbReference type="ChiTaRS" id="Foxn3">
    <property type="organism name" value="mouse"/>
</dbReference>
<dbReference type="PRO" id="PR:Q499D0"/>
<dbReference type="Proteomes" id="UP000000589">
    <property type="component" value="Chromosome 12"/>
</dbReference>
<dbReference type="RNAct" id="Q499D0">
    <property type="molecule type" value="protein"/>
</dbReference>
<dbReference type="Bgee" id="ENSMUSG00000033713">
    <property type="expression patterns" value="Expressed in animal zygote and 236 other cell types or tissues"/>
</dbReference>
<dbReference type="ExpressionAtlas" id="Q499D0">
    <property type="expression patterns" value="baseline and differential"/>
</dbReference>
<dbReference type="GO" id="GO:0005634">
    <property type="term" value="C:nucleus"/>
    <property type="evidence" value="ECO:0007669"/>
    <property type="project" value="UniProtKB-SubCell"/>
</dbReference>
<dbReference type="GO" id="GO:0003700">
    <property type="term" value="F:DNA-binding transcription factor activity"/>
    <property type="evidence" value="ECO:0007669"/>
    <property type="project" value="InterPro"/>
</dbReference>
<dbReference type="GO" id="GO:0043565">
    <property type="term" value="F:sequence-specific DNA binding"/>
    <property type="evidence" value="ECO:0007669"/>
    <property type="project" value="InterPro"/>
</dbReference>
<dbReference type="GO" id="GO:0097094">
    <property type="term" value="P:craniofacial suture morphogenesis"/>
    <property type="evidence" value="ECO:0000315"/>
    <property type="project" value="MGI"/>
</dbReference>
<dbReference type="GO" id="GO:0007095">
    <property type="term" value="P:mitotic G2 DNA damage checkpoint signaling"/>
    <property type="evidence" value="ECO:0007669"/>
    <property type="project" value="Ensembl"/>
</dbReference>
<dbReference type="GO" id="GO:0045892">
    <property type="term" value="P:negative regulation of DNA-templated transcription"/>
    <property type="evidence" value="ECO:0007669"/>
    <property type="project" value="Ensembl"/>
</dbReference>
<dbReference type="CDD" id="cd20059">
    <property type="entry name" value="FH_FOXN3"/>
    <property type="match status" value="1"/>
</dbReference>
<dbReference type="FunFam" id="1.10.10.10:FF:000167">
    <property type="entry name" value="forkhead box protein N3 isoform X1"/>
    <property type="match status" value="1"/>
</dbReference>
<dbReference type="Gene3D" id="1.10.10.10">
    <property type="entry name" value="Winged helix-like DNA-binding domain superfamily/Winged helix DNA-binding domain"/>
    <property type="match status" value="1"/>
</dbReference>
<dbReference type="InterPro" id="IPR047404">
    <property type="entry name" value="FH_FOXN3"/>
</dbReference>
<dbReference type="InterPro" id="IPR001766">
    <property type="entry name" value="Fork_head_dom"/>
</dbReference>
<dbReference type="InterPro" id="IPR047119">
    <property type="entry name" value="FOXN2/3-like"/>
</dbReference>
<dbReference type="InterPro" id="IPR018122">
    <property type="entry name" value="TF_fork_head_CS_1"/>
</dbReference>
<dbReference type="InterPro" id="IPR030456">
    <property type="entry name" value="TF_fork_head_CS_2"/>
</dbReference>
<dbReference type="InterPro" id="IPR036388">
    <property type="entry name" value="WH-like_DNA-bd_sf"/>
</dbReference>
<dbReference type="InterPro" id="IPR036390">
    <property type="entry name" value="WH_DNA-bd_sf"/>
</dbReference>
<dbReference type="PANTHER" id="PTHR13962:SF20">
    <property type="entry name" value="FORKHEAD BOX PROTEIN N3"/>
    <property type="match status" value="1"/>
</dbReference>
<dbReference type="PANTHER" id="PTHR13962">
    <property type="entry name" value="FORKHEAD BOX PROTEIN N3-LIKE PROTEIN-RELATED"/>
    <property type="match status" value="1"/>
</dbReference>
<dbReference type="Pfam" id="PF00250">
    <property type="entry name" value="Forkhead"/>
    <property type="match status" value="1"/>
</dbReference>
<dbReference type="PRINTS" id="PR00053">
    <property type="entry name" value="FORKHEAD"/>
</dbReference>
<dbReference type="SMART" id="SM00339">
    <property type="entry name" value="FH"/>
    <property type="match status" value="1"/>
</dbReference>
<dbReference type="SUPFAM" id="SSF46785">
    <property type="entry name" value="Winged helix' DNA-binding domain"/>
    <property type="match status" value="1"/>
</dbReference>
<dbReference type="PROSITE" id="PS00657">
    <property type="entry name" value="FORK_HEAD_1"/>
    <property type="match status" value="1"/>
</dbReference>
<dbReference type="PROSITE" id="PS00658">
    <property type="entry name" value="FORK_HEAD_2"/>
    <property type="match status" value="1"/>
</dbReference>
<dbReference type="PROSITE" id="PS50039">
    <property type="entry name" value="FORK_HEAD_3"/>
    <property type="match status" value="1"/>
</dbReference>
<comment type="function">
    <text evidence="1">Acts as a transcriptional repressor. May be involved in DNA damage-inducible cell cycle arrests (checkpoints) (By similarity).</text>
</comment>
<comment type="subunit">
    <text evidence="1">Interacts through its C-terminus with the C-terminus of SNW1/SKIP.</text>
</comment>
<comment type="subcellular location">
    <subcellularLocation>
        <location evidence="4">Nucleus</location>
    </subcellularLocation>
</comment>
<evidence type="ECO:0000250" key="1">
    <source>
        <dbReference type="UniProtKB" id="O00409"/>
    </source>
</evidence>
<evidence type="ECO:0000255" key="2">
    <source>
        <dbReference type="PROSITE-ProRule" id="PRU00089"/>
    </source>
</evidence>
<evidence type="ECO:0000256" key="3">
    <source>
        <dbReference type="SAM" id="MobiDB-lite"/>
    </source>
</evidence>
<evidence type="ECO:0000305" key="4"/>
<evidence type="ECO:0000312" key="5">
    <source>
        <dbReference type="EMBL" id="AAH99971.1"/>
    </source>
</evidence>
<evidence type="ECO:0000312" key="6">
    <source>
        <dbReference type="EMBL" id="BAB30701.1"/>
    </source>
</evidence>
<evidence type="ECO:0000312" key="7">
    <source>
        <dbReference type="EMBL" id="BAC37064.1"/>
    </source>
</evidence>
<evidence type="ECO:0007744" key="8">
    <source>
    </source>
</evidence>
<accession>Q499D0</accession>
<accession>Q8C5N8</accession>
<accession>Q9CU83</accession>
<keyword id="KW-0131">Cell cycle</keyword>
<keyword id="KW-0238">DNA-binding</keyword>
<keyword id="KW-0539">Nucleus</keyword>
<keyword id="KW-0597">Phosphoprotein</keyword>
<keyword id="KW-1185">Reference proteome</keyword>
<keyword id="KW-0678">Repressor</keyword>
<keyword id="KW-0804">Transcription</keyword>
<keyword id="KW-0805">Transcription regulation</keyword>
<sequence length="457" mass="50345">MGPVMPASKKAESSGISVSSGLSQRYRGSGFSKALQEDDDLDFPLPDIRLEEGAMEDEELTNLNWLHESKNLLKSFGESVLRSVSPVQDLDDDTPPSPAHSDMPYDARQNPNCKPPYSFSCLIFMAIEDSPTKRLPVKDIYNWILEHFPYFANAPTGWKNSVRHNLSLNKCFKKVDKERSQSIGKGSLWCIDPEYRQNLIQALKKTPYHPPPTPQAYQSTSGPPIWPGSTFFKRNGALLQVSPGVIQNGARVLSRGLFPGVRPLPITPIGMTAAIRNSITSCRMRTESEPPCGSPVVSGDPKEDHNYSSAKSSTARSTSPTSDSISSSSSSADDHYEFATKGSQEGSEGSFQSHESHSEPEEEDRKPSPKEGKDALGDSGYASQHKKRQHFAKARKVPSDTLPLKKRRTEKPPESDDEEMKEAAGSLLHLAGIRSCLNNITNRTAKGQKEQKETAKN</sequence>
<feature type="chain" id="PRO_0000245102" description="Forkhead box protein N3">
    <location>
        <begin position="1"/>
        <end position="457"/>
    </location>
</feature>
<feature type="DNA-binding region" description="Fork-head" evidence="2">
    <location>
        <begin position="114"/>
        <end position="210"/>
    </location>
</feature>
<feature type="region of interest" description="Disordered" evidence="3">
    <location>
        <begin position="1"/>
        <end position="24"/>
    </location>
</feature>
<feature type="region of interest" description="Disordered" evidence="3">
    <location>
        <begin position="86"/>
        <end position="109"/>
    </location>
</feature>
<feature type="region of interest" description="Disordered" evidence="3">
    <location>
        <begin position="285"/>
        <end position="422"/>
    </location>
</feature>
<feature type="compositionally biased region" description="Low complexity" evidence="3">
    <location>
        <begin position="13"/>
        <end position="23"/>
    </location>
</feature>
<feature type="compositionally biased region" description="Low complexity" evidence="3">
    <location>
        <begin position="308"/>
        <end position="331"/>
    </location>
</feature>
<feature type="compositionally biased region" description="Low complexity" evidence="3">
    <location>
        <begin position="342"/>
        <end position="353"/>
    </location>
</feature>
<feature type="compositionally biased region" description="Basic and acidic residues" evidence="3">
    <location>
        <begin position="354"/>
        <end position="376"/>
    </location>
</feature>
<feature type="compositionally biased region" description="Basic residues" evidence="3">
    <location>
        <begin position="384"/>
        <end position="396"/>
    </location>
</feature>
<feature type="modified residue" description="Phosphoserine" evidence="8">
    <location>
        <position position="83"/>
    </location>
</feature>
<feature type="modified residue" description="Phosphoserine" evidence="1">
    <location>
        <position position="85"/>
    </location>
</feature>
<feature type="modified residue" description="Phosphoserine" evidence="8">
    <location>
        <position position="97"/>
    </location>
</feature>
<feature type="modified residue" description="Phosphoserine" evidence="8">
    <location>
        <position position="415"/>
    </location>
</feature>
<name>FOXN3_MOUSE</name>
<reference evidence="5" key="1">
    <citation type="journal article" date="2004" name="Genome Res.">
        <title>The status, quality, and expansion of the NIH full-length cDNA project: the Mammalian Gene Collection (MGC).</title>
        <authorList>
            <consortium name="The MGC Project Team"/>
        </authorList>
    </citation>
    <scope>NUCLEOTIDE SEQUENCE [LARGE SCALE MRNA]</scope>
    <source>
        <strain evidence="5">129/Sv X 129SvCp</strain>
        <tissue evidence="5">Embryonic stem cell</tissue>
    </source>
</reference>
<reference evidence="6" key="2">
    <citation type="journal article" date="2005" name="Science">
        <title>The transcriptional landscape of the mammalian genome.</title>
        <authorList>
            <person name="Carninci P."/>
            <person name="Kasukawa T."/>
            <person name="Katayama S."/>
            <person name="Gough J."/>
            <person name="Frith M.C."/>
            <person name="Maeda N."/>
            <person name="Oyama R."/>
            <person name="Ravasi T."/>
            <person name="Lenhard B."/>
            <person name="Wells C."/>
            <person name="Kodzius R."/>
            <person name="Shimokawa K."/>
            <person name="Bajic V.B."/>
            <person name="Brenner S.E."/>
            <person name="Batalov S."/>
            <person name="Forrest A.R."/>
            <person name="Zavolan M."/>
            <person name="Davis M.J."/>
            <person name="Wilming L.G."/>
            <person name="Aidinis V."/>
            <person name="Allen J.E."/>
            <person name="Ambesi-Impiombato A."/>
            <person name="Apweiler R."/>
            <person name="Aturaliya R.N."/>
            <person name="Bailey T.L."/>
            <person name="Bansal M."/>
            <person name="Baxter L."/>
            <person name="Beisel K.W."/>
            <person name="Bersano T."/>
            <person name="Bono H."/>
            <person name="Chalk A.M."/>
            <person name="Chiu K.P."/>
            <person name="Choudhary V."/>
            <person name="Christoffels A."/>
            <person name="Clutterbuck D.R."/>
            <person name="Crowe M.L."/>
            <person name="Dalla E."/>
            <person name="Dalrymple B.P."/>
            <person name="de Bono B."/>
            <person name="Della Gatta G."/>
            <person name="di Bernardo D."/>
            <person name="Down T."/>
            <person name="Engstrom P."/>
            <person name="Fagiolini M."/>
            <person name="Faulkner G."/>
            <person name="Fletcher C.F."/>
            <person name="Fukushima T."/>
            <person name="Furuno M."/>
            <person name="Futaki S."/>
            <person name="Gariboldi M."/>
            <person name="Georgii-Hemming P."/>
            <person name="Gingeras T.R."/>
            <person name="Gojobori T."/>
            <person name="Green R.E."/>
            <person name="Gustincich S."/>
            <person name="Harbers M."/>
            <person name="Hayashi Y."/>
            <person name="Hensch T.K."/>
            <person name="Hirokawa N."/>
            <person name="Hill D."/>
            <person name="Huminiecki L."/>
            <person name="Iacono M."/>
            <person name="Ikeo K."/>
            <person name="Iwama A."/>
            <person name="Ishikawa T."/>
            <person name="Jakt M."/>
            <person name="Kanapin A."/>
            <person name="Katoh M."/>
            <person name="Kawasawa Y."/>
            <person name="Kelso J."/>
            <person name="Kitamura H."/>
            <person name="Kitano H."/>
            <person name="Kollias G."/>
            <person name="Krishnan S.P."/>
            <person name="Kruger A."/>
            <person name="Kummerfeld S.K."/>
            <person name="Kurochkin I.V."/>
            <person name="Lareau L.F."/>
            <person name="Lazarevic D."/>
            <person name="Lipovich L."/>
            <person name="Liu J."/>
            <person name="Liuni S."/>
            <person name="McWilliam S."/>
            <person name="Madan Babu M."/>
            <person name="Madera M."/>
            <person name="Marchionni L."/>
            <person name="Matsuda H."/>
            <person name="Matsuzawa S."/>
            <person name="Miki H."/>
            <person name="Mignone F."/>
            <person name="Miyake S."/>
            <person name="Morris K."/>
            <person name="Mottagui-Tabar S."/>
            <person name="Mulder N."/>
            <person name="Nakano N."/>
            <person name="Nakauchi H."/>
            <person name="Ng P."/>
            <person name="Nilsson R."/>
            <person name="Nishiguchi S."/>
            <person name="Nishikawa S."/>
            <person name="Nori F."/>
            <person name="Ohara O."/>
            <person name="Okazaki Y."/>
            <person name="Orlando V."/>
            <person name="Pang K.C."/>
            <person name="Pavan W.J."/>
            <person name="Pavesi G."/>
            <person name="Pesole G."/>
            <person name="Petrovsky N."/>
            <person name="Piazza S."/>
            <person name="Reed J."/>
            <person name="Reid J.F."/>
            <person name="Ring B.Z."/>
            <person name="Ringwald M."/>
            <person name="Rost B."/>
            <person name="Ruan Y."/>
            <person name="Salzberg S.L."/>
            <person name="Sandelin A."/>
            <person name="Schneider C."/>
            <person name="Schoenbach C."/>
            <person name="Sekiguchi K."/>
            <person name="Semple C.A."/>
            <person name="Seno S."/>
            <person name="Sessa L."/>
            <person name="Sheng Y."/>
            <person name="Shibata Y."/>
            <person name="Shimada H."/>
            <person name="Shimada K."/>
            <person name="Silva D."/>
            <person name="Sinclair B."/>
            <person name="Sperling S."/>
            <person name="Stupka E."/>
            <person name="Sugiura K."/>
            <person name="Sultana R."/>
            <person name="Takenaka Y."/>
            <person name="Taki K."/>
            <person name="Tammoja K."/>
            <person name="Tan S.L."/>
            <person name="Tang S."/>
            <person name="Taylor M.S."/>
            <person name="Tegner J."/>
            <person name="Teichmann S.A."/>
            <person name="Ueda H.R."/>
            <person name="van Nimwegen E."/>
            <person name="Verardo R."/>
            <person name="Wei C.L."/>
            <person name="Yagi K."/>
            <person name="Yamanishi H."/>
            <person name="Zabarovsky E."/>
            <person name="Zhu S."/>
            <person name="Zimmer A."/>
            <person name="Hide W."/>
            <person name="Bult C."/>
            <person name="Grimmond S.M."/>
            <person name="Teasdale R.D."/>
            <person name="Liu E.T."/>
            <person name="Brusic V."/>
            <person name="Quackenbush J."/>
            <person name="Wahlestedt C."/>
            <person name="Mattick J.S."/>
            <person name="Hume D.A."/>
            <person name="Kai C."/>
            <person name="Sasaki D."/>
            <person name="Tomaru Y."/>
            <person name="Fukuda S."/>
            <person name="Kanamori-Katayama M."/>
            <person name="Suzuki M."/>
            <person name="Aoki J."/>
            <person name="Arakawa T."/>
            <person name="Iida J."/>
            <person name="Imamura K."/>
            <person name="Itoh M."/>
            <person name="Kato T."/>
            <person name="Kawaji H."/>
            <person name="Kawagashira N."/>
            <person name="Kawashima T."/>
            <person name="Kojima M."/>
            <person name="Kondo S."/>
            <person name="Konno H."/>
            <person name="Nakano K."/>
            <person name="Ninomiya N."/>
            <person name="Nishio T."/>
            <person name="Okada M."/>
            <person name="Plessy C."/>
            <person name="Shibata K."/>
            <person name="Shiraki T."/>
            <person name="Suzuki S."/>
            <person name="Tagami M."/>
            <person name="Waki K."/>
            <person name="Watahiki A."/>
            <person name="Okamura-Oho Y."/>
            <person name="Suzuki H."/>
            <person name="Kawai J."/>
            <person name="Hayashizaki Y."/>
        </authorList>
    </citation>
    <scope>NUCLEOTIDE SEQUENCE [LARGE SCALE MRNA] OF 46-457</scope>
    <source>
        <strain evidence="6">C57BL/6J</strain>
        <tissue evidence="7">Embryonic testis</tissue>
        <tissue evidence="6">Head</tissue>
    </source>
</reference>
<reference key="3">
    <citation type="journal article" date="2007" name="Proc. Natl. Acad. Sci. U.S.A.">
        <title>Large-scale phosphorylation analysis of mouse liver.</title>
        <authorList>
            <person name="Villen J."/>
            <person name="Beausoleil S.A."/>
            <person name="Gerber S.A."/>
            <person name="Gygi S.P."/>
        </authorList>
    </citation>
    <scope>IDENTIFICATION BY MASS SPECTROMETRY [LARGE SCALE ANALYSIS]</scope>
    <source>
        <tissue>Liver</tissue>
    </source>
</reference>
<reference key="4">
    <citation type="journal article" date="2010" name="Cell">
        <title>A tissue-specific atlas of mouse protein phosphorylation and expression.</title>
        <authorList>
            <person name="Huttlin E.L."/>
            <person name="Jedrychowski M.P."/>
            <person name="Elias J.E."/>
            <person name="Goswami T."/>
            <person name="Rad R."/>
            <person name="Beausoleil S.A."/>
            <person name="Villen J."/>
            <person name="Haas W."/>
            <person name="Sowa M.E."/>
            <person name="Gygi S.P."/>
        </authorList>
    </citation>
    <scope>PHOSPHORYLATION [LARGE SCALE ANALYSIS] AT SER-83; SER-97 AND SER-415</scope>
    <scope>IDENTIFICATION BY MASS SPECTROMETRY [LARGE SCALE ANALYSIS]</scope>
    <source>
        <tissue>Brain</tissue>
        <tissue>Brown adipose tissue</tissue>
        <tissue>Kidney</tissue>
        <tissue>Liver</tissue>
        <tissue>Lung</tissue>
        <tissue>Pancreas</tissue>
        <tissue>Spleen</tissue>
        <tissue>Testis</tissue>
    </source>
</reference>